<dbReference type="EC" id="2.1.2.10" evidence="1"/>
<dbReference type="EMBL" id="CP000553">
    <property type="protein sequence ID" value="ABM76717.1"/>
    <property type="molecule type" value="Genomic_DNA"/>
</dbReference>
<dbReference type="RefSeq" id="WP_011824653.1">
    <property type="nucleotide sequence ID" value="NC_008819.1"/>
</dbReference>
<dbReference type="SMR" id="A2C5F7"/>
<dbReference type="KEGG" id="pme:NATL1_21611"/>
<dbReference type="eggNOG" id="COG0404">
    <property type="taxonomic scope" value="Bacteria"/>
</dbReference>
<dbReference type="HOGENOM" id="CLU_007884_10_2_3"/>
<dbReference type="Proteomes" id="UP000002592">
    <property type="component" value="Chromosome"/>
</dbReference>
<dbReference type="GO" id="GO:0005829">
    <property type="term" value="C:cytosol"/>
    <property type="evidence" value="ECO:0007669"/>
    <property type="project" value="TreeGrafter"/>
</dbReference>
<dbReference type="GO" id="GO:0005960">
    <property type="term" value="C:glycine cleavage complex"/>
    <property type="evidence" value="ECO:0007669"/>
    <property type="project" value="InterPro"/>
</dbReference>
<dbReference type="GO" id="GO:0004047">
    <property type="term" value="F:aminomethyltransferase activity"/>
    <property type="evidence" value="ECO:0007669"/>
    <property type="project" value="UniProtKB-UniRule"/>
</dbReference>
<dbReference type="GO" id="GO:0008483">
    <property type="term" value="F:transaminase activity"/>
    <property type="evidence" value="ECO:0007669"/>
    <property type="project" value="UniProtKB-KW"/>
</dbReference>
<dbReference type="GO" id="GO:0019464">
    <property type="term" value="P:glycine decarboxylation via glycine cleavage system"/>
    <property type="evidence" value="ECO:0007669"/>
    <property type="project" value="UniProtKB-UniRule"/>
</dbReference>
<dbReference type="FunFam" id="2.40.30.110:FF:000003">
    <property type="entry name" value="Aminomethyltransferase"/>
    <property type="match status" value="1"/>
</dbReference>
<dbReference type="FunFam" id="4.10.1250.10:FF:000001">
    <property type="entry name" value="Aminomethyltransferase"/>
    <property type="match status" value="1"/>
</dbReference>
<dbReference type="Gene3D" id="2.40.30.110">
    <property type="entry name" value="Aminomethyltransferase beta-barrel domains"/>
    <property type="match status" value="1"/>
</dbReference>
<dbReference type="Gene3D" id="3.30.70.1400">
    <property type="entry name" value="Aminomethyltransferase beta-barrel domains"/>
    <property type="match status" value="1"/>
</dbReference>
<dbReference type="Gene3D" id="4.10.1250.10">
    <property type="entry name" value="Aminomethyltransferase fragment"/>
    <property type="match status" value="1"/>
</dbReference>
<dbReference type="Gene3D" id="3.30.1360.120">
    <property type="entry name" value="Probable tRNA modification gtpase trme, domain 1"/>
    <property type="match status" value="1"/>
</dbReference>
<dbReference type="HAMAP" id="MF_00259">
    <property type="entry name" value="GcvT"/>
    <property type="match status" value="1"/>
</dbReference>
<dbReference type="InterPro" id="IPR006223">
    <property type="entry name" value="GCS_T"/>
</dbReference>
<dbReference type="InterPro" id="IPR022903">
    <property type="entry name" value="GCS_T_bac"/>
</dbReference>
<dbReference type="InterPro" id="IPR013977">
    <property type="entry name" value="GCST_C"/>
</dbReference>
<dbReference type="InterPro" id="IPR006222">
    <property type="entry name" value="GCV_T_N"/>
</dbReference>
<dbReference type="InterPro" id="IPR028896">
    <property type="entry name" value="GcvT/YgfZ/DmdA"/>
</dbReference>
<dbReference type="InterPro" id="IPR029043">
    <property type="entry name" value="GcvT/YgfZ_C"/>
</dbReference>
<dbReference type="InterPro" id="IPR027266">
    <property type="entry name" value="TrmE/GcvT_dom1"/>
</dbReference>
<dbReference type="NCBIfam" id="TIGR00528">
    <property type="entry name" value="gcvT"/>
    <property type="match status" value="1"/>
</dbReference>
<dbReference type="NCBIfam" id="NF001567">
    <property type="entry name" value="PRK00389.1"/>
    <property type="match status" value="1"/>
</dbReference>
<dbReference type="PANTHER" id="PTHR43757">
    <property type="entry name" value="AMINOMETHYLTRANSFERASE"/>
    <property type="match status" value="1"/>
</dbReference>
<dbReference type="PANTHER" id="PTHR43757:SF2">
    <property type="entry name" value="AMINOMETHYLTRANSFERASE, MITOCHONDRIAL"/>
    <property type="match status" value="1"/>
</dbReference>
<dbReference type="Pfam" id="PF01571">
    <property type="entry name" value="GCV_T"/>
    <property type="match status" value="1"/>
</dbReference>
<dbReference type="Pfam" id="PF08669">
    <property type="entry name" value="GCV_T_C"/>
    <property type="match status" value="1"/>
</dbReference>
<dbReference type="PIRSF" id="PIRSF006487">
    <property type="entry name" value="GcvT"/>
    <property type="match status" value="1"/>
</dbReference>
<dbReference type="SUPFAM" id="SSF101790">
    <property type="entry name" value="Aminomethyltransferase beta-barrel domain"/>
    <property type="match status" value="1"/>
</dbReference>
<dbReference type="SUPFAM" id="SSF103025">
    <property type="entry name" value="Folate-binding domain"/>
    <property type="match status" value="1"/>
</dbReference>
<sequence>MKLLQTPLYQECKELGGKMVPFANWEMPVSFSGLIEEHNAVRKNVGMFDISHMGVVQLKGKNIKSALQNLVPSDVFRIGPSEACYTVFLKENGGIQDDLIIYDQGVLDTNEESVVLVINAARKESDVEWLSSNLSKKEITISEFMPEGALIAIQGPESISTLEKILEEPLSNLPRFGHRTITSNPNLINSQESIFIARTGYTGEEGFEFLSSPETAKSIWKSLIASGVTPCGLGARDTLRLEASMHLYGNDINLDTTPFEAGLGWLVHLEMPNDFIGRKALEKQAEVGTQKKLVGIQVLDKGIARKGYPVLYNSETVGIVTSGTWSPTLQKPIALAYVPSEIAKVNTQIEVEIRGKKHPAIIVKRPFYRKGF</sequence>
<comment type="function">
    <text evidence="1">The glycine cleavage system catalyzes the degradation of glycine.</text>
</comment>
<comment type="catalytic activity">
    <reaction evidence="1">
        <text>N(6)-[(R)-S(8)-aminomethyldihydrolipoyl]-L-lysyl-[protein] + (6S)-5,6,7,8-tetrahydrofolate = N(6)-[(R)-dihydrolipoyl]-L-lysyl-[protein] + (6R)-5,10-methylene-5,6,7,8-tetrahydrofolate + NH4(+)</text>
        <dbReference type="Rhea" id="RHEA:16945"/>
        <dbReference type="Rhea" id="RHEA-COMP:10475"/>
        <dbReference type="Rhea" id="RHEA-COMP:10492"/>
        <dbReference type="ChEBI" id="CHEBI:15636"/>
        <dbReference type="ChEBI" id="CHEBI:28938"/>
        <dbReference type="ChEBI" id="CHEBI:57453"/>
        <dbReference type="ChEBI" id="CHEBI:83100"/>
        <dbReference type="ChEBI" id="CHEBI:83143"/>
        <dbReference type="EC" id="2.1.2.10"/>
    </reaction>
</comment>
<comment type="subunit">
    <text evidence="1">The glycine cleavage system is composed of four proteins: P, T, L and H.</text>
</comment>
<comment type="similarity">
    <text evidence="1">Belongs to the GcvT family.</text>
</comment>
<protein>
    <recommendedName>
        <fullName evidence="1">Aminomethyltransferase</fullName>
        <ecNumber evidence="1">2.1.2.10</ecNumber>
    </recommendedName>
    <alternativeName>
        <fullName evidence="1">Glycine cleavage system T protein</fullName>
    </alternativeName>
</protein>
<feature type="chain" id="PRO_1000047687" description="Aminomethyltransferase">
    <location>
        <begin position="1"/>
        <end position="372"/>
    </location>
</feature>
<keyword id="KW-0032">Aminotransferase</keyword>
<keyword id="KW-0808">Transferase</keyword>
<organism>
    <name type="scientific">Prochlorococcus marinus (strain NATL1A)</name>
    <dbReference type="NCBI Taxonomy" id="167555"/>
    <lineage>
        <taxon>Bacteria</taxon>
        <taxon>Bacillati</taxon>
        <taxon>Cyanobacteriota</taxon>
        <taxon>Cyanophyceae</taxon>
        <taxon>Synechococcales</taxon>
        <taxon>Prochlorococcaceae</taxon>
        <taxon>Prochlorococcus</taxon>
    </lineage>
</organism>
<name>GCST_PROM1</name>
<reference key="1">
    <citation type="journal article" date="2007" name="PLoS Genet.">
        <title>Patterns and implications of gene gain and loss in the evolution of Prochlorococcus.</title>
        <authorList>
            <person name="Kettler G.C."/>
            <person name="Martiny A.C."/>
            <person name="Huang K."/>
            <person name="Zucker J."/>
            <person name="Coleman M.L."/>
            <person name="Rodrigue S."/>
            <person name="Chen F."/>
            <person name="Lapidus A."/>
            <person name="Ferriera S."/>
            <person name="Johnson J."/>
            <person name="Steglich C."/>
            <person name="Church G.M."/>
            <person name="Richardson P."/>
            <person name="Chisholm S.W."/>
        </authorList>
    </citation>
    <scope>NUCLEOTIDE SEQUENCE [LARGE SCALE GENOMIC DNA]</scope>
    <source>
        <strain>NATL1A</strain>
    </source>
</reference>
<proteinExistence type="inferred from homology"/>
<evidence type="ECO:0000255" key="1">
    <source>
        <dbReference type="HAMAP-Rule" id="MF_00259"/>
    </source>
</evidence>
<gene>
    <name evidence="1" type="primary">gcvT</name>
    <name type="ordered locus">NATL1_21611</name>
</gene>
<accession>A2C5F7</accession>